<proteinExistence type="inferred from homology"/>
<sequence>MALNLQDKQAIVAEVSEVAKGALSAVVADSRGVTVDKMTELRKAGREAGVYMRVVRNTLLRRVVEGTQFECLKDTFVGPTLIAYSMEHPGAAARLFKEFAKANAKFEVKAAAFEGELIPASQIDRLATLPTYEEAIARLMATMKEASAGKLVRTLAAVRDAKEAA</sequence>
<name>RL10_SALPK</name>
<reference key="1">
    <citation type="journal article" date="2009" name="BMC Genomics">
        <title>Pseudogene accumulation in the evolutionary histories of Salmonella enterica serovars Paratyphi A and Typhi.</title>
        <authorList>
            <person name="Holt K.E."/>
            <person name="Thomson N.R."/>
            <person name="Wain J."/>
            <person name="Langridge G.C."/>
            <person name="Hasan R."/>
            <person name="Bhutta Z.A."/>
            <person name="Quail M.A."/>
            <person name="Norbertczak H."/>
            <person name="Walker D."/>
            <person name="Simmonds M."/>
            <person name="White B."/>
            <person name="Bason N."/>
            <person name="Mungall K."/>
            <person name="Dougan G."/>
            <person name="Parkhill J."/>
        </authorList>
    </citation>
    <scope>NUCLEOTIDE SEQUENCE [LARGE SCALE GENOMIC DNA]</scope>
    <source>
        <strain>AKU_12601</strain>
    </source>
</reference>
<organism>
    <name type="scientific">Salmonella paratyphi A (strain AKU_12601)</name>
    <dbReference type="NCBI Taxonomy" id="554290"/>
    <lineage>
        <taxon>Bacteria</taxon>
        <taxon>Pseudomonadati</taxon>
        <taxon>Pseudomonadota</taxon>
        <taxon>Gammaproteobacteria</taxon>
        <taxon>Enterobacterales</taxon>
        <taxon>Enterobacteriaceae</taxon>
        <taxon>Salmonella</taxon>
    </lineage>
</organism>
<dbReference type="EMBL" id="FM200053">
    <property type="protein sequence ID" value="CAR61987.1"/>
    <property type="molecule type" value="Genomic_DNA"/>
</dbReference>
<dbReference type="RefSeq" id="WP_001207203.1">
    <property type="nucleotide sequence ID" value="NC_011147.1"/>
</dbReference>
<dbReference type="GeneID" id="93756505"/>
<dbReference type="KEGG" id="sek:SSPA3704"/>
<dbReference type="HOGENOM" id="CLU_092227_0_2_6"/>
<dbReference type="Proteomes" id="UP000001869">
    <property type="component" value="Chromosome"/>
</dbReference>
<dbReference type="GO" id="GO:0015934">
    <property type="term" value="C:large ribosomal subunit"/>
    <property type="evidence" value="ECO:0007669"/>
    <property type="project" value="InterPro"/>
</dbReference>
<dbReference type="GO" id="GO:0070180">
    <property type="term" value="F:large ribosomal subunit rRNA binding"/>
    <property type="evidence" value="ECO:0007669"/>
    <property type="project" value="UniProtKB-UniRule"/>
</dbReference>
<dbReference type="GO" id="GO:0003735">
    <property type="term" value="F:structural constituent of ribosome"/>
    <property type="evidence" value="ECO:0007669"/>
    <property type="project" value="InterPro"/>
</dbReference>
<dbReference type="GO" id="GO:0006412">
    <property type="term" value="P:translation"/>
    <property type="evidence" value="ECO:0007669"/>
    <property type="project" value="UniProtKB-UniRule"/>
</dbReference>
<dbReference type="CDD" id="cd05797">
    <property type="entry name" value="Ribosomal_L10"/>
    <property type="match status" value="1"/>
</dbReference>
<dbReference type="FunFam" id="3.30.70.1730:FF:000001">
    <property type="entry name" value="50S ribosomal protein L10"/>
    <property type="match status" value="1"/>
</dbReference>
<dbReference type="Gene3D" id="3.30.70.1730">
    <property type="match status" value="1"/>
</dbReference>
<dbReference type="Gene3D" id="6.10.250.2350">
    <property type="match status" value="1"/>
</dbReference>
<dbReference type="HAMAP" id="MF_00362">
    <property type="entry name" value="Ribosomal_uL10"/>
    <property type="match status" value="1"/>
</dbReference>
<dbReference type="InterPro" id="IPR001790">
    <property type="entry name" value="Ribosomal_uL10"/>
</dbReference>
<dbReference type="InterPro" id="IPR043141">
    <property type="entry name" value="Ribosomal_uL10-like_sf"/>
</dbReference>
<dbReference type="InterPro" id="IPR022973">
    <property type="entry name" value="Ribosomal_uL10_bac"/>
</dbReference>
<dbReference type="InterPro" id="IPR047865">
    <property type="entry name" value="Ribosomal_uL10_bac_type"/>
</dbReference>
<dbReference type="InterPro" id="IPR002363">
    <property type="entry name" value="Ribosomal_uL10_CS_bac"/>
</dbReference>
<dbReference type="NCBIfam" id="NF000955">
    <property type="entry name" value="PRK00099.1-1"/>
    <property type="match status" value="1"/>
</dbReference>
<dbReference type="PANTHER" id="PTHR11560">
    <property type="entry name" value="39S RIBOSOMAL PROTEIN L10, MITOCHONDRIAL"/>
    <property type="match status" value="1"/>
</dbReference>
<dbReference type="Pfam" id="PF00466">
    <property type="entry name" value="Ribosomal_L10"/>
    <property type="match status" value="1"/>
</dbReference>
<dbReference type="SUPFAM" id="SSF160369">
    <property type="entry name" value="Ribosomal protein L10-like"/>
    <property type="match status" value="1"/>
</dbReference>
<dbReference type="PROSITE" id="PS01109">
    <property type="entry name" value="RIBOSOMAL_L10"/>
    <property type="match status" value="1"/>
</dbReference>
<gene>
    <name evidence="1" type="primary">rplJ</name>
    <name type="ordered locus">SSPA3704</name>
</gene>
<evidence type="ECO:0000255" key="1">
    <source>
        <dbReference type="HAMAP-Rule" id="MF_00362"/>
    </source>
</evidence>
<evidence type="ECO:0000305" key="2"/>
<comment type="function">
    <text evidence="1">Forms part of the ribosomal stalk, playing a central role in the interaction of the ribosome with GTP-bound translation factors.</text>
</comment>
<comment type="subunit">
    <text evidence="1">Part of the ribosomal stalk of the 50S ribosomal subunit. The N-terminus interacts with L11 and the large rRNA to form the base of the stalk. The C-terminus forms an elongated spine to which L12 dimers bind in a sequential fashion forming a multimeric L10(L12)X complex.</text>
</comment>
<comment type="similarity">
    <text evidence="1">Belongs to the universal ribosomal protein uL10 family.</text>
</comment>
<feature type="chain" id="PRO_1000121012" description="Large ribosomal subunit protein uL10">
    <location>
        <begin position="1"/>
        <end position="165"/>
    </location>
</feature>
<protein>
    <recommendedName>
        <fullName evidence="1">Large ribosomal subunit protein uL10</fullName>
    </recommendedName>
    <alternativeName>
        <fullName evidence="2">50S ribosomal protein L10</fullName>
    </alternativeName>
</protein>
<accession>B5BJQ1</accession>
<keyword id="KW-0687">Ribonucleoprotein</keyword>
<keyword id="KW-0689">Ribosomal protein</keyword>
<keyword id="KW-0694">RNA-binding</keyword>
<keyword id="KW-0699">rRNA-binding</keyword>